<proteinExistence type="inferred from homology"/>
<accession>Q9CHD0</accession>
<gene>
    <name evidence="1" type="primary">rnc</name>
    <name type="ordered locus">LL0802</name>
    <name type="ORF">L0326</name>
</gene>
<keyword id="KW-0963">Cytoplasm</keyword>
<keyword id="KW-0255">Endonuclease</keyword>
<keyword id="KW-0378">Hydrolase</keyword>
<keyword id="KW-0460">Magnesium</keyword>
<keyword id="KW-0479">Metal-binding</keyword>
<keyword id="KW-0507">mRNA processing</keyword>
<keyword id="KW-0540">Nuclease</keyword>
<keyword id="KW-1185">Reference proteome</keyword>
<keyword id="KW-0694">RNA-binding</keyword>
<keyword id="KW-0698">rRNA processing</keyword>
<keyword id="KW-0699">rRNA-binding</keyword>
<keyword id="KW-0819">tRNA processing</keyword>
<feature type="chain" id="PRO_0000180403" description="Ribonuclease 3">
    <location>
        <begin position="1"/>
        <end position="231"/>
    </location>
</feature>
<feature type="domain" description="RNase III" evidence="1">
    <location>
        <begin position="5"/>
        <end position="134"/>
    </location>
</feature>
<feature type="domain" description="DRBM" evidence="1">
    <location>
        <begin position="160"/>
        <end position="229"/>
    </location>
</feature>
<feature type="active site" evidence="1">
    <location>
        <position position="51"/>
    </location>
</feature>
<feature type="active site" evidence="1">
    <location>
        <position position="123"/>
    </location>
</feature>
<feature type="binding site" evidence="1">
    <location>
        <position position="47"/>
    </location>
    <ligand>
        <name>Mg(2+)</name>
        <dbReference type="ChEBI" id="CHEBI:18420"/>
    </ligand>
</feature>
<feature type="binding site" evidence="1">
    <location>
        <position position="120"/>
    </location>
    <ligand>
        <name>Mg(2+)</name>
        <dbReference type="ChEBI" id="CHEBI:18420"/>
    </ligand>
</feature>
<feature type="binding site" evidence="1">
    <location>
        <position position="123"/>
    </location>
    <ligand>
        <name>Mg(2+)</name>
        <dbReference type="ChEBI" id="CHEBI:18420"/>
    </ligand>
</feature>
<protein>
    <recommendedName>
        <fullName evidence="1">Ribonuclease 3</fullName>
        <ecNumber evidence="1">3.1.26.3</ecNumber>
    </recommendedName>
    <alternativeName>
        <fullName evidence="1">Ribonuclease III</fullName>
        <shortName evidence="1">RNase III</shortName>
    </alternativeName>
</protein>
<sequence length="231" mass="26137">MLKLQKKLKNDYGLVFNDEDLLKTAFTHSSFTNEERLPKIANNERLEFLGDVALSLVISDYLYRTYPEKLEGELSKMRSSIVRTESLANFSRSCGFGEFLRLGHGEEKMGGRDRETTLENLFEAFLGALFIDQGMDEVRKFIQHVVIPHVKNDDYVKVIDYKTELQEVLQIGGETTISYKILKEEGPAHDRSFVAAVFNNGKELGRGLGKSKKVAEQKAAENAIKGQNHVS</sequence>
<reference key="1">
    <citation type="journal article" date="2001" name="Genome Res.">
        <title>The complete genome sequence of the lactic acid bacterium Lactococcus lactis ssp. lactis IL1403.</title>
        <authorList>
            <person name="Bolotin A."/>
            <person name="Wincker P."/>
            <person name="Mauger S."/>
            <person name="Jaillon O."/>
            <person name="Malarme K."/>
            <person name="Weissenbach J."/>
            <person name="Ehrlich S.D."/>
            <person name="Sorokin A."/>
        </authorList>
    </citation>
    <scope>NUCLEOTIDE SEQUENCE [LARGE SCALE GENOMIC DNA]</scope>
    <source>
        <strain>IL1403</strain>
    </source>
</reference>
<name>RNC_LACLA</name>
<evidence type="ECO:0000255" key="1">
    <source>
        <dbReference type="HAMAP-Rule" id="MF_00104"/>
    </source>
</evidence>
<organism>
    <name type="scientific">Lactococcus lactis subsp. lactis (strain IL1403)</name>
    <name type="common">Streptococcus lactis</name>
    <dbReference type="NCBI Taxonomy" id="272623"/>
    <lineage>
        <taxon>Bacteria</taxon>
        <taxon>Bacillati</taxon>
        <taxon>Bacillota</taxon>
        <taxon>Bacilli</taxon>
        <taxon>Lactobacillales</taxon>
        <taxon>Streptococcaceae</taxon>
        <taxon>Lactococcus</taxon>
    </lineage>
</organism>
<dbReference type="EC" id="3.1.26.3" evidence="1"/>
<dbReference type="EMBL" id="AE005176">
    <property type="protein sequence ID" value="AAK04900.1"/>
    <property type="molecule type" value="Genomic_DNA"/>
</dbReference>
<dbReference type="PIR" id="B86725">
    <property type="entry name" value="B86725"/>
</dbReference>
<dbReference type="RefSeq" id="NP_266958.1">
    <property type="nucleotide sequence ID" value="NC_002662.1"/>
</dbReference>
<dbReference type="RefSeq" id="WP_010905569.1">
    <property type="nucleotide sequence ID" value="NC_002662.1"/>
</dbReference>
<dbReference type="SMR" id="Q9CHD0"/>
<dbReference type="PaxDb" id="272623-L0326"/>
<dbReference type="EnsemblBacteria" id="AAK04900">
    <property type="protein sequence ID" value="AAK04900"/>
    <property type="gene ID" value="L0326"/>
</dbReference>
<dbReference type="GeneID" id="89632935"/>
<dbReference type="KEGG" id="lla:L0326"/>
<dbReference type="PATRIC" id="fig|272623.7.peg.858"/>
<dbReference type="eggNOG" id="COG0571">
    <property type="taxonomic scope" value="Bacteria"/>
</dbReference>
<dbReference type="HOGENOM" id="CLU_000907_1_3_9"/>
<dbReference type="OrthoDB" id="9805026at2"/>
<dbReference type="Proteomes" id="UP000002196">
    <property type="component" value="Chromosome"/>
</dbReference>
<dbReference type="GO" id="GO:0005737">
    <property type="term" value="C:cytoplasm"/>
    <property type="evidence" value="ECO:0007669"/>
    <property type="project" value="UniProtKB-SubCell"/>
</dbReference>
<dbReference type="GO" id="GO:0003725">
    <property type="term" value="F:double-stranded RNA binding"/>
    <property type="evidence" value="ECO:0007669"/>
    <property type="project" value="TreeGrafter"/>
</dbReference>
<dbReference type="GO" id="GO:0046872">
    <property type="term" value="F:metal ion binding"/>
    <property type="evidence" value="ECO:0007669"/>
    <property type="project" value="UniProtKB-KW"/>
</dbReference>
<dbReference type="GO" id="GO:0004525">
    <property type="term" value="F:ribonuclease III activity"/>
    <property type="evidence" value="ECO:0007669"/>
    <property type="project" value="UniProtKB-UniRule"/>
</dbReference>
<dbReference type="GO" id="GO:0019843">
    <property type="term" value="F:rRNA binding"/>
    <property type="evidence" value="ECO:0007669"/>
    <property type="project" value="UniProtKB-KW"/>
</dbReference>
<dbReference type="GO" id="GO:0006397">
    <property type="term" value="P:mRNA processing"/>
    <property type="evidence" value="ECO:0007669"/>
    <property type="project" value="UniProtKB-UniRule"/>
</dbReference>
<dbReference type="GO" id="GO:0010468">
    <property type="term" value="P:regulation of gene expression"/>
    <property type="evidence" value="ECO:0007669"/>
    <property type="project" value="TreeGrafter"/>
</dbReference>
<dbReference type="GO" id="GO:0006364">
    <property type="term" value="P:rRNA processing"/>
    <property type="evidence" value="ECO:0007669"/>
    <property type="project" value="UniProtKB-UniRule"/>
</dbReference>
<dbReference type="GO" id="GO:0008033">
    <property type="term" value="P:tRNA processing"/>
    <property type="evidence" value="ECO:0007669"/>
    <property type="project" value="UniProtKB-KW"/>
</dbReference>
<dbReference type="CDD" id="cd10845">
    <property type="entry name" value="DSRM_RNAse_III_family"/>
    <property type="match status" value="1"/>
</dbReference>
<dbReference type="CDD" id="cd00593">
    <property type="entry name" value="RIBOc"/>
    <property type="match status" value="1"/>
</dbReference>
<dbReference type="FunFam" id="1.10.1520.10:FF:000001">
    <property type="entry name" value="Ribonuclease 3"/>
    <property type="match status" value="1"/>
</dbReference>
<dbReference type="FunFam" id="3.30.160.20:FF:000003">
    <property type="entry name" value="Ribonuclease 3"/>
    <property type="match status" value="1"/>
</dbReference>
<dbReference type="Gene3D" id="3.30.160.20">
    <property type="match status" value="1"/>
</dbReference>
<dbReference type="Gene3D" id="1.10.1520.10">
    <property type="entry name" value="Ribonuclease III domain"/>
    <property type="match status" value="1"/>
</dbReference>
<dbReference type="HAMAP" id="MF_00104">
    <property type="entry name" value="RNase_III"/>
    <property type="match status" value="1"/>
</dbReference>
<dbReference type="InterPro" id="IPR014720">
    <property type="entry name" value="dsRBD_dom"/>
</dbReference>
<dbReference type="InterPro" id="IPR011907">
    <property type="entry name" value="RNase_III"/>
</dbReference>
<dbReference type="InterPro" id="IPR000999">
    <property type="entry name" value="RNase_III_dom"/>
</dbReference>
<dbReference type="InterPro" id="IPR036389">
    <property type="entry name" value="RNase_III_sf"/>
</dbReference>
<dbReference type="NCBIfam" id="TIGR02191">
    <property type="entry name" value="RNaseIII"/>
    <property type="match status" value="1"/>
</dbReference>
<dbReference type="PANTHER" id="PTHR11207:SF0">
    <property type="entry name" value="RIBONUCLEASE 3"/>
    <property type="match status" value="1"/>
</dbReference>
<dbReference type="PANTHER" id="PTHR11207">
    <property type="entry name" value="RIBONUCLEASE III"/>
    <property type="match status" value="1"/>
</dbReference>
<dbReference type="Pfam" id="PF00035">
    <property type="entry name" value="dsrm"/>
    <property type="match status" value="1"/>
</dbReference>
<dbReference type="Pfam" id="PF14622">
    <property type="entry name" value="Ribonucleas_3_3"/>
    <property type="match status" value="1"/>
</dbReference>
<dbReference type="SMART" id="SM00358">
    <property type="entry name" value="DSRM"/>
    <property type="match status" value="1"/>
</dbReference>
<dbReference type="SMART" id="SM00535">
    <property type="entry name" value="RIBOc"/>
    <property type="match status" value="1"/>
</dbReference>
<dbReference type="SUPFAM" id="SSF54768">
    <property type="entry name" value="dsRNA-binding domain-like"/>
    <property type="match status" value="1"/>
</dbReference>
<dbReference type="SUPFAM" id="SSF69065">
    <property type="entry name" value="RNase III domain-like"/>
    <property type="match status" value="1"/>
</dbReference>
<dbReference type="PROSITE" id="PS50137">
    <property type="entry name" value="DS_RBD"/>
    <property type="match status" value="1"/>
</dbReference>
<dbReference type="PROSITE" id="PS50142">
    <property type="entry name" value="RNASE_3_2"/>
    <property type="match status" value="1"/>
</dbReference>
<comment type="function">
    <text evidence="1">Digests double-stranded RNA. Involved in the processing of primary rRNA transcript to yield the immediate precursors to the large and small rRNAs (23S and 16S). Processes some mRNAs, and tRNAs when they are encoded in the rRNA operon. Processes pre-crRNA and tracrRNA of type II CRISPR loci if present in the organism.</text>
</comment>
<comment type="catalytic activity">
    <reaction evidence="1">
        <text>Endonucleolytic cleavage to 5'-phosphomonoester.</text>
        <dbReference type="EC" id="3.1.26.3"/>
    </reaction>
</comment>
<comment type="cofactor">
    <cofactor evidence="1">
        <name>Mg(2+)</name>
        <dbReference type="ChEBI" id="CHEBI:18420"/>
    </cofactor>
</comment>
<comment type="subunit">
    <text evidence="1">Homodimer.</text>
</comment>
<comment type="subcellular location">
    <subcellularLocation>
        <location evidence="1">Cytoplasm</location>
    </subcellularLocation>
</comment>
<comment type="similarity">
    <text evidence="1">Belongs to the ribonuclease III family.</text>
</comment>